<organism>
    <name type="scientific">Aquifex aeolicus (strain VF5)</name>
    <dbReference type="NCBI Taxonomy" id="224324"/>
    <lineage>
        <taxon>Bacteria</taxon>
        <taxon>Pseudomonadati</taxon>
        <taxon>Aquificota</taxon>
        <taxon>Aquificia</taxon>
        <taxon>Aquificales</taxon>
        <taxon>Aquificaceae</taxon>
        <taxon>Aquifex</taxon>
    </lineage>
</organism>
<reference key="1">
    <citation type="journal article" date="1998" name="Nature">
        <title>The complete genome of the hyperthermophilic bacterium Aquifex aeolicus.</title>
        <authorList>
            <person name="Deckert G."/>
            <person name="Warren P.V."/>
            <person name="Gaasterland T."/>
            <person name="Young W.G."/>
            <person name="Lenox A.L."/>
            <person name="Graham D.E."/>
            <person name="Overbeek R."/>
            <person name="Snead M.A."/>
            <person name="Keller M."/>
            <person name="Aujay M."/>
            <person name="Huber R."/>
            <person name="Feldman R.A."/>
            <person name="Short J.M."/>
            <person name="Olsen G.J."/>
            <person name="Swanson R.V."/>
        </authorList>
    </citation>
    <scope>NUCLEOTIDE SEQUENCE [LARGE SCALE GENOMIC DNA]</scope>
    <source>
        <strain>VF5</strain>
    </source>
</reference>
<protein>
    <recommendedName>
        <fullName>Phosphoenolpyruvate synthase</fullName>
        <shortName>PEP synthase</shortName>
        <ecNumber>2.7.9.2</ecNumber>
    </recommendedName>
    <alternativeName>
        <fullName>Pyruvate, water dikinase</fullName>
    </alternativeName>
</protein>
<proteinExistence type="inferred from homology"/>
<accession>O67899</accession>
<dbReference type="EC" id="2.7.9.2"/>
<dbReference type="EMBL" id="AE000657">
    <property type="protein sequence ID" value="AAC07865.1"/>
    <property type="molecule type" value="Genomic_DNA"/>
</dbReference>
<dbReference type="PIR" id="G70483">
    <property type="entry name" value="G70483"/>
</dbReference>
<dbReference type="RefSeq" id="NP_214468.1">
    <property type="nucleotide sequence ID" value="NC_000918.1"/>
</dbReference>
<dbReference type="RefSeq" id="WP_010881404.1">
    <property type="nucleotide sequence ID" value="NC_000918.1"/>
</dbReference>
<dbReference type="SMR" id="O67899"/>
<dbReference type="FunCoup" id="O67899">
    <property type="interactions" value="192"/>
</dbReference>
<dbReference type="STRING" id="224324.aq_2142"/>
<dbReference type="EnsemblBacteria" id="AAC07865">
    <property type="protein sequence ID" value="AAC07865"/>
    <property type="gene ID" value="aq_2142"/>
</dbReference>
<dbReference type="KEGG" id="aae:aq_2142"/>
<dbReference type="PATRIC" id="fig|224324.8.peg.1656"/>
<dbReference type="eggNOG" id="COG0574">
    <property type="taxonomic scope" value="Bacteria"/>
</dbReference>
<dbReference type="eggNOG" id="COG1080">
    <property type="taxonomic scope" value="Bacteria"/>
</dbReference>
<dbReference type="HOGENOM" id="CLU_007308_6_2_0"/>
<dbReference type="InParanoid" id="O67899"/>
<dbReference type="OrthoDB" id="9765468at2"/>
<dbReference type="UniPathway" id="UPA00138"/>
<dbReference type="Proteomes" id="UP000000798">
    <property type="component" value="Chromosome"/>
</dbReference>
<dbReference type="GO" id="GO:0005524">
    <property type="term" value="F:ATP binding"/>
    <property type="evidence" value="ECO:0007669"/>
    <property type="project" value="UniProtKB-KW"/>
</dbReference>
<dbReference type="GO" id="GO:0046872">
    <property type="term" value="F:metal ion binding"/>
    <property type="evidence" value="ECO:0007669"/>
    <property type="project" value="UniProtKB-KW"/>
</dbReference>
<dbReference type="GO" id="GO:0008986">
    <property type="term" value="F:pyruvate, water dikinase activity"/>
    <property type="evidence" value="ECO:0007669"/>
    <property type="project" value="UniProtKB-EC"/>
</dbReference>
<dbReference type="GO" id="GO:0006094">
    <property type="term" value="P:gluconeogenesis"/>
    <property type="evidence" value="ECO:0007669"/>
    <property type="project" value="UniProtKB-UniPathway"/>
</dbReference>
<dbReference type="FunFam" id="3.30.1490.20:FF:000010">
    <property type="entry name" value="Phosphoenolpyruvate synthase"/>
    <property type="match status" value="1"/>
</dbReference>
<dbReference type="FunFam" id="3.30.470.20:FF:000017">
    <property type="entry name" value="Phosphoenolpyruvate synthase"/>
    <property type="match status" value="1"/>
</dbReference>
<dbReference type="FunFam" id="3.50.30.10:FF:000002">
    <property type="entry name" value="Phosphoenolpyruvate synthase"/>
    <property type="match status" value="1"/>
</dbReference>
<dbReference type="Gene3D" id="3.30.1490.20">
    <property type="entry name" value="ATP-grasp fold, A domain"/>
    <property type="match status" value="1"/>
</dbReference>
<dbReference type="Gene3D" id="3.30.470.20">
    <property type="entry name" value="ATP-grasp fold, B domain"/>
    <property type="match status" value="1"/>
</dbReference>
<dbReference type="Gene3D" id="3.20.20.60">
    <property type="entry name" value="Phosphoenolpyruvate-binding domains"/>
    <property type="match status" value="1"/>
</dbReference>
<dbReference type="Gene3D" id="3.50.30.10">
    <property type="entry name" value="Phosphohistidine domain"/>
    <property type="match status" value="1"/>
</dbReference>
<dbReference type="InterPro" id="IPR013815">
    <property type="entry name" value="ATP_grasp_subdomain_1"/>
</dbReference>
<dbReference type="InterPro" id="IPR008279">
    <property type="entry name" value="PEP-util_enz_mobile_dom"/>
</dbReference>
<dbReference type="InterPro" id="IPR006319">
    <property type="entry name" value="PEP_synth"/>
</dbReference>
<dbReference type="InterPro" id="IPR018274">
    <property type="entry name" value="PEP_util_AS"/>
</dbReference>
<dbReference type="InterPro" id="IPR000121">
    <property type="entry name" value="PEP_util_C"/>
</dbReference>
<dbReference type="InterPro" id="IPR023151">
    <property type="entry name" value="PEP_util_CS"/>
</dbReference>
<dbReference type="InterPro" id="IPR036637">
    <property type="entry name" value="Phosphohistidine_dom_sf"/>
</dbReference>
<dbReference type="InterPro" id="IPR002192">
    <property type="entry name" value="PPDK_AMP/ATP-bd"/>
</dbReference>
<dbReference type="InterPro" id="IPR015813">
    <property type="entry name" value="Pyrv/PenolPyrv_kinase-like_dom"/>
</dbReference>
<dbReference type="InterPro" id="IPR040442">
    <property type="entry name" value="Pyrv_kinase-like_dom_sf"/>
</dbReference>
<dbReference type="NCBIfam" id="TIGR01418">
    <property type="entry name" value="PEP_synth"/>
    <property type="match status" value="1"/>
</dbReference>
<dbReference type="NCBIfam" id="NF005057">
    <property type="entry name" value="PRK06464.1"/>
    <property type="match status" value="1"/>
</dbReference>
<dbReference type="PANTHER" id="PTHR43030">
    <property type="entry name" value="PHOSPHOENOLPYRUVATE SYNTHASE"/>
    <property type="match status" value="1"/>
</dbReference>
<dbReference type="PANTHER" id="PTHR43030:SF1">
    <property type="entry name" value="PHOSPHOENOLPYRUVATE SYNTHASE"/>
    <property type="match status" value="1"/>
</dbReference>
<dbReference type="Pfam" id="PF00391">
    <property type="entry name" value="PEP-utilizers"/>
    <property type="match status" value="1"/>
</dbReference>
<dbReference type="Pfam" id="PF02896">
    <property type="entry name" value="PEP-utilizers_C"/>
    <property type="match status" value="1"/>
</dbReference>
<dbReference type="Pfam" id="PF01326">
    <property type="entry name" value="PPDK_N"/>
    <property type="match status" value="1"/>
</dbReference>
<dbReference type="PRINTS" id="PR01736">
    <property type="entry name" value="PHPHTRNFRASE"/>
</dbReference>
<dbReference type="SUPFAM" id="SSF56059">
    <property type="entry name" value="Glutathione synthetase ATP-binding domain-like"/>
    <property type="match status" value="1"/>
</dbReference>
<dbReference type="SUPFAM" id="SSF51621">
    <property type="entry name" value="Phosphoenolpyruvate/pyruvate domain"/>
    <property type="match status" value="1"/>
</dbReference>
<dbReference type="SUPFAM" id="SSF52009">
    <property type="entry name" value="Phosphohistidine domain"/>
    <property type="match status" value="1"/>
</dbReference>
<dbReference type="PROSITE" id="PS00742">
    <property type="entry name" value="PEP_ENZYMES_2"/>
    <property type="match status" value="1"/>
</dbReference>
<dbReference type="PROSITE" id="PS00370">
    <property type="entry name" value="PEP_ENZYMES_PHOS_SITE"/>
    <property type="match status" value="1"/>
</dbReference>
<feature type="chain" id="PRO_0000147032" description="Phosphoenolpyruvate synthase">
    <location>
        <begin position="1"/>
        <end position="856"/>
    </location>
</feature>
<feature type="active site" description="Tele-phosphohistidine intermediate" evidence="1">
    <location>
        <position position="433"/>
    </location>
</feature>
<feature type="active site" description="Proton donor" evidence="1">
    <location>
        <position position="809"/>
    </location>
</feature>
<feature type="binding site" evidence="1">
    <location>
        <position position="523"/>
    </location>
    <ligand>
        <name>substrate</name>
    </ligand>
</feature>
<feature type="binding site" evidence="1">
    <location>
        <position position="636"/>
    </location>
    <ligand>
        <name>substrate</name>
    </ligand>
</feature>
<feature type="binding site" evidence="1">
    <location>
        <position position="738"/>
    </location>
    <ligand>
        <name>Mg(2+)</name>
        <dbReference type="ChEBI" id="CHEBI:18420"/>
    </ligand>
</feature>
<feature type="binding site" evidence="1">
    <location>
        <position position="738"/>
    </location>
    <ligand>
        <name>substrate</name>
    </ligand>
</feature>
<feature type="binding site" evidence="1">
    <location>
        <position position="759"/>
    </location>
    <ligand>
        <name>substrate</name>
    </ligand>
</feature>
<feature type="binding site" evidence="1">
    <location>
        <position position="760"/>
    </location>
    <ligand>
        <name>substrate</name>
    </ligand>
</feature>
<feature type="binding site" evidence="1">
    <location>
        <position position="761"/>
    </location>
    <ligand>
        <name>substrate</name>
    </ligand>
</feature>
<feature type="binding site" evidence="1">
    <location>
        <position position="762"/>
    </location>
    <ligand>
        <name>Mg(2+)</name>
        <dbReference type="ChEBI" id="CHEBI:18420"/>
    </ligand>
</feature>
<feature type="binding site" evidence="1">
    <location>
        <position position="762"/>
    </location>
    <ligand>
        <name>substrate</name>
    </ligand>
</feature>
<evidence type="ECO:0000250" key="1"/>
<evidence type="ECO:0000305" key="2"/>
<sequence>MSVDKSKALVLWLDEVTIEDIPIAGGKNASLGEMIRNLSPLGVKIPYGYVVTANAYYYFLDYNNLRDKIRKILEGLNTDDLKDLQRRGHEVRELIRGGTFPPDLEEAIKDYYNKLSEKYKTHAVDVAVRSSATAEDLPDASFAGQQETYLNVVGAENVLVAIKNCFASLFTDRAIVYRERFGFDHFKVGIAVGVQKMVRSDMGASGVMFTLDTETGFKDVVVINAAYGLGELLVRGEVTPDEYIVFKPTLMKGYSAIIEKKLGRKDRKMIYGTGDERVKIVNVPKEDQKKFALNDDEILQLAKWGVLIEEHYSKKNGRWTPMDIEWAKDGILNELFVVQARPETVHSRKKENVVKIYKIKTPEEERKNRVIVKGIAVGDKIATGKARVLFDLKEADQFQEGEILVTDITDPDWEPVMKKAAAIVTNRGGRTSHAAIVARELGIPAVVGTGNATEKIKTGEEITVSCAEGETGYVYEGKIDYEVEEINLENIPKPKTKIMMNIGNPESAFRYASLPNDGVGLAREEFIIANYIKIHPLALLHYEDLKELYEKLERENLIDEKGFVQFKLIYHYANGRLANKLAKGKDKLRVNLRKILQDIENLTFGYEDKATYYIKKLSYGIAKIAAAFYPNPVIVRFSDFKSNEYANLIGGILFEPEEENPMLGWRGASRYYSDVFKEAFGMECKAIIRVRNKMGLTNTKVMIPFCRTPEEGEKVLQVMEEYGLRKGENGLEVYVMAELPSNIVLADRYAQIFDGFSIGSNDLTQLTLGLDRDSELVAHLYDERNEAVKRLIAQLIKTAKEYGRKVGICGQAPSDFPEFAQFLVEQGIDSISLNPDSVLKTMLAVVEMEKKLGVLK</sequence>
<keyword id="KW-0067">ATP-binding</keyword>
<keyword id="KW-0418">Kinase</keyword>
<keyword id="KW-0460">Magnesium</keyword>
<keyword id="KW-0479">Metal-binding</keyword>
<keyword id="KW-0547">Nucleotide-binding</keyword>
<keyword id="KW-1185">Reference proteome</keyword>
<keyword id="KW-0808">Transferase</keyword>
<name>PPSA_AQUAE</name>
<gene>
    <name type="primary">ppsA</name>
    <name type="ordered locus">aq_2142</name>
</gene>
<comment type="function">
    <text evidence="1">Catalyzes the phosphorylation of pyruvate to phosphoenolpyruvate.</text>
</comment>
<comment type="catalytic activity">
    <reaction>
        <text>pyruvate + ATP + H2O = phosphoenolpyruvate + AMP + phosphate + 2 H(+)</text>
        <dbReference type="Rhea" id="RHEA:11364"/>
        <dbReference type="ChEBI" id="CHEBI:15361"/>
        <dbReference type="ChEBI" id="CHEBI:15377"/>
        <dbReference type="ChEBI" id="CHEBI:15378"/>
        <dbReference type="ChEBI" id="CHEBI:30616"/>
        <dbReference type="ChEBI" id="CHEBI:43474"/>
        <dbReference type="ChEBI" id="CHEBI:58702"/>
        <dbReference type="ChEBI" id="CHEBI:456215"/>
        <dbReference type="EC" id="2.7.9.2"/>
    </reaction>
</comment>
<comment type="cofactor">
    <cofactor evidence="1">
        <name>Mg(2+)</name>
        <dbReference type="ChEBI" id="CHEBI:18420"/>
    </cofactor>
</comment>
<comment type="pathway">
    <text>Carbohydrate biosynthesis; gluconeogenesis.</text>
</comment>
<comment type="domain">
    <text evidence="1">The N-terminal domain contains the ATP/Pi binding site, the central domain the pyrophosphate/phosphate carrier histidine, and the C-terminal domain the pyruvate binding site.</text>
</comment>
<comment type="miscellaneous">
    <text evidence="1">The reaction takes place in three steps, mediated by a phosphocarrier histidine residue located on the surface of the central domain. The two first partial reactions are catalyzed at an active site located on the N-terminal domain, and the third partial reaction is catalyzed at an active site located on the C-terminal domain. For catalytic turnover, the central domain swivels from the concave surface of the N-terminal domain to that of the C-terminal domain (By similarity).</text>
</comment>
<comment type="similarity">
    <text evidence="2">Belongs to the PEP-utilizing enzyme family.</text>
</comment>